<protein>
    <recommendedName>
        <fullName evidence="1">Serine/threonine transporter SstT</fullName>
    </recommendedName>
    <alternativeName>
        <fullName evidence="1">Na(+)/serine-threonine symporter</fullName>
    </alternativeName>
</protein>
<gene>
    <name evidence="1" type="primary">sstT</name>
    <name type="ordered locus">SEQ_1897</name>
</gene>
<sequence length="404" mass="42564">MKRIRDLWVRTNLIKKIGIGVVIGLLLGILLPDVTAIGILGQLFVGALKAIAPLLVFALVAQAISHQRSGQQTNMTLIIVLYLLGTFLAALVAVIANYLFPLTLTLNTPVNTELSPPQGIVQVFQTLLLKLVDNPINALATANYIGVLAWALIFGLALKSVPSDFKHLIKTAADVTSQIVVWIINVAPIGIMGLVFSTVSENGISILSDYALLILVLVGTMLFVALVVNPLLAFVLTHQNPYPLVFRCLKDSGLTAFFTRSSAANIPVNLQLCEDLGLSQATYLVSIPLGAMINMGGAAITINVLTLAAVNTFGIQIDFLTALLLSVVAAISACGASGVTGGSLLLIPVACSLFGISSDLAMQVVGVGFIVGVIQDSCETALNSSTDVLFTAIAENAFWKQKKA</sequence>
<comment type="function">
    <text evidence="1">Involved in the import of serine and threonine into the cell, with the concomitant import of sodium (symport system).</text>
</comment>
<comment type="catalytic activity">
    <reaction evidence="1">
        <text>L-serine(in) + Na(+)(in) = L-serine(out) + Na(+)(out)</text>
        <dbReference type="Rhea" id="RHEA:29575"/>
        <dbReference type="ChEBI" id="CHEBI:29101"/>
        <dbReference type="ChEBI" id="CHEBI:33384"/>
    </reaction>
    <physiologicalReaction direction="right-to-left" evidence="1">
        <dbReference type="Rhea" id="RHEA:29577"/>
    </physiologicalReaction>
</comment>
<comment type="catalytic activity">
    <reaction evidence="1">
        <text>L-threonine(in) + Na(+)(in) = L-threonine(out) + Na(+)(out)</text>
        <dbReference type="Rhea" id="RHEA:69999"/>
        <dbReference type="ChEBI" id="CHEBI:29101"/>
        <dbReference type="ChEBI" id="CHEBI:57926"/>
    </reaction>
    <physiologicalReaction direction="right-to-left" evidence="1">
        <dbReference type="Rhea" id="RHEA:70001"/>
    </physiologicalReaction>
</comment>
<comment type="subcellular location">
    <subcellularLocation>
        <location evidence="1">Cell membrane</location>
        <topology evidence="1">Multi-pass membrane protein</topology>
    </subcellularLocation>
</comment>
<comment type="similarity">
    <text evidence="1">Belongs to the dicarboxylate/amino acid:cation symporter (DAACS) (TC 2.A.23) family.</text>
</comment>
<reference key="1">
    <citation type="journal article" date="2009" name="PLoS Pathog.">
        <title>Genomic evidence for the evolution of Streptococcus equi: host restriction, increased virulence, and genetic exchange with human pathogens.</title>
        <authorList>
            <person name="Holden M.T.G."/>
            <person name="Heather Z."/>
            <person name="Paillot R."/>
            <person name="Steward K.F."/>
            <person name="Webb K."/>
            <person name="Ainslie F."/>
            <person name="Jourdan T."/>
            <person name="Bason N.C."/>
            <person name="Holroyd N.E."/>
            <person name="Mungall K."/>
            <person name="Quail M.A."/>
            <person name="Sanders M."/>
            <person name="Simmonds M."/>
            <person name="Willey D."/>
            <person name="Brooks K."/>
            <person name="Aanensen D.M."/>
            <person name="Spratt B.G."/>
            <person name="Jolley K.A."/>
            <person name="Maiden M.C.J."/>
            <person name="Kehoe M."/>
            <person name="Chanter N."/>
            <person name="Bentley S.D."/>
            <person name="Robinson C."/>
            <person name="Maskell D.J."/>
            <person name="Parkhill J."/>
            <person name="Waller A.S."/>
        </authorList>
    </citation>
    <scope>NUCLEOTIDE SEQUENCE [LARGE SCALE GENOMIC DNA]</scope>
    <source>
        <strain>4047</strain>
    </source>
</reference>
<feature type="chain" id="PRO_1000185656" description="Serine/threonine transporter SstT">
    <location>
        <begin position="1"/>
        <end position="404"/>
    </location>
</feature>
<feature type="transmembrane region" description="Helical" evidence="1">
    <location>
        <begin position="17"/>
        <end position="37"/>
    </location>
</feature>
<feature type="transmembrane region" description="Helical" evidence="1">
    <location>
        <begin position="39"/>
        <end position="59"/>
    </location>
</feature>
<feature type="transmembrane region" description="Helical" evidence="1">
    <location>
        <begin position="75"/>
        <end position="95"/>
    </location>
</feature>
<feature type="transmembrane region" description="Helical" evidence="1">
    <location>
        <begin position="138"/>
        <end position="158"/>
    </location>
</feature>
<feature type="transmembrane region" description="Helical" evidence="1">
    <location>
        <begin position="179"/>
        <end position="199"/>
    </location>
</feature>
<feature type="transmembrane region" description="Helical" evidence="1">
    <location>
        <begin position="212"/>
        <end position="232"/>
    </location>
</feature>
<feature type="transmembrane region" description="Helical" evidence="1">
    <location>
        <begin position="287"/>
        <end position="307"/>
    </location>
</feature>
<feature type="transmembrane region" description="Helical" evidence="1">
    <location>
        <begin position="319"/>
        <end position="339"/>
    </location>
</feature>
<feature type="transmembrane region" description="Helical" evidence="1">
    <location>
        <begin position="354"/>
        <end position="374"/>
    </location>
</feature>
<evidence type="ECO:0000255" key="1">
    <source>
        <dbReference type="HAMAP-Rule" id="MF_01582"/>
    </source>
</evidence>
<organism>
    <name type="scientific">Streptococcus equi subsp. equi (strain 4047)</name>
    <dbReference type="NCBI Taxonomy" id="553482"/>
    <lineage>
        <taxon>Bacteria</taxon>
        <taxon>Bacillati</taxon>
        <taxon>Bacillota</taxon>
        <taxon>Bacilli</taxon>
        <taxon>Lactobacillales</taxon>
        <taxon>Streptococcaceae</taxon>
        <taxon>Streptococcus</taxon>
    </lineage>
</organism>
<proteinExistence type="inferred from homology"/>
<name>SSTT_STRE4</name>
<keyword id="KW-0029">Amino-acid transport</keyword>
<keyword id="KW-1003">Cell membrane</keyword>
<keyword id="KW-0472">Membrane</keyword>
<keyword id="KW-0769">Symport</keyword>
<keyword id="KW-0812">Transmembrane</keyword>
<keyword id="KW-1133">Transmembrane helix</keyword>
<keyword id="KW-0813">Transport</keyword>
<dbReference type="EMBL" id="FM204883">
    <property type="protein sequence ID" value="CAW95092.1"/>
    <property type="molecule type" value="Genomic_DNA"/>
</dbReference>
<dbReference type="RefSeq" id="WP_012680075.1">
    <property type="nucleotide sequence ID" value="NC_012471.1"/>
</dbReference>
<dbReference type="SMR" id="C0M824"/>
<dbReference type="KEGG" id="seu:SEQ_1897"/>
<dbReference type="HOGENOM" id="CLU_044581_0_0_9"/>
<dbReference type="OrthoDB" id="9768885at2"/>
<dbReference type="Proteomes" id="UP000001365">
    <property type="component" value="Chromosome"/>
</dbReference>
<dbReference type="GO" id="GO:0005886">
    <property type="term" value="C:plasma membrane"/>
    <property type="evidence" value="ECO:0007669"/>
    <property type="project" value="UniProtKB-SubCell"/>
</dbReference>
<dbReference type="GO" id="GO:0005295">
    <property type="term" value="F:neutral L-amino acid:sodium symporter activity"/>
    <property type="evidence" value="ECO:0007669"/>
    <property type="project" value="TreeGrafter"/>
</dbReference>
<dbReference type="GO" id="GO:0032329">
    <property type="term" value="P:serine transport"/>
    <property type="evidence" value="ECO:0007669"/>
    <property type="project" value="InterPro"/>
</dbReference>
<dbReference type="GO" id="GO:0015826">
    <property type="term" value="P:threonine transport"/>
    <property type="evidence" value="ECO:0007669"/>
    <property type="project" value="InterPro"/>
</dbReference>
<dbReference type="FunFam" id="1.10.3860.10:FF:000003">
    <property type="entry name" value="Serine/threonine transporter sstT"/>
    <property type="match status" value="1"/>
</dbReference>
<dbReference type="Gene3D" id="1.10.3860.10">
    <property type="entry name" value="Sodium:dicarboxylate symporter"/>
    <property type="match status" value="1"/>
</dbReference>
<dbReference type="HAMAP" id="MF_01582">
    <property type="entry name" value="Ser_Thr_transp_SstT"/>
    <property type="match status" value="1"/>
</dbReference>
<dbReference type="InterPro" id="IPR001991">
    <property type="entry name" value="Na-dicarboxylate_symporter"/>
</dbReference>
<dbReference type="InterPro" id="IPR036458">
    <property type="entry name" value="Na:dicarbo_symporter_sf"/>
</dbReference>
<dbReference type="InterPro" id="IPR023025">
    <property type="entry name" value="Ser_Thr_transp_SstT"/>
</dbReference>
<dbReference type="NCBIfam" id="NF010151">
    <property type="entry name" value="PRK13628.1"/>
    <property type="match status" value="1"/>
</dbReference>
<dbReference type="PANTHER" id="PTHR42865">
    <property type="entry name" value="PROTON/GLUTAMATE-ASPARTATE SYMPORTER"/>
    <property type="match status" value="1"/>
</dbReference>
<dbReference type="PANTHER" id="PTHR42865:SF8">
    <property type="entry name" value="SERINE_THREONINE TRANSPORTER SSTT"/>
    <property type="match status" value="1"/>
</dbReference>
<dbReference type="Pfam" id="PF00375">
    <property type="entry name" value="SDF"/>
    <property type="match status" value="1"/>
</dbReference>
<dbReference type="PRINTS" id="PR00173">
    <property type="entry name" value="EDTRNSPORT"/>
</dbReference>
<dbReference type="SUPFAM" id="SSF118215">
    <property type="entry name" value="Proton glutamate symport protein"/>
    <property type="match status" value="1"/>
</dbReference>
<accession>C0M824</accession>